<feature type="chain" id="PRO_0000445175" description="Protein YneP">
    <location>
        <begin position="1"/>
        <end position="40"/>
    </location>
</feature>
<proteinExistence type="evidence at protein level"/>
<dbReference type="EMBL" id="U00096">
    <property type="protein sequence ID" value="AYC08212.1"/>
    <property type="molecule type" value="Genomic_DNA"/>
</dbReference>
<dbReference type="EnsemblBacteria" id="AYC08212">
    <property type="protein sequence ID" value="AYC08212"/>
    <property type="gene ID" value="b4747"/>
</dbReference>
<dbReference type="InParanoid" id="P0DPO7"/>
<dbReference type="BioCyc" id="EcoCyc:MONOMER0-4424"/>
<dbReference type="PRO" id="PR:P0DPO7"/>
<dbReference type="Proteomes" id="UP000000625">
    <property type="component" value="Chromosome"/>
</dbReference>
<dbReference type="Pfam" id="PF23696">
    <property type="entry name" value="YneP"/>
    <property type="match status" value="1"/>
</dbReference>
<organism>
    <name type="scientific">Escherichia coli (strain K12)</name>
    <dbReference type="NCBI Taxonomy" id="83333"/>
    <lineage>
        <taxon>Bacteria</taxon>
        <taxon>Pseudomonadati</taxon>
        <taxon>Pseudomonadota</taxon>
        <taxon>Gammaproteobacteria</taxon>
        <taxon>Enterobacterales</taxon>
        <taxon>Enterobacteriaceae</taxon>
        <taxon>Escherichia</taxon>
    </lineage>
</organism>
<sequence>MTKHPTGIYVGCLVKVIRRRLRMELKESVINYSPFVLQHP</sequence>
<reference key="1">
    <citation type="journal article" date="1997" name="Science">
        <title>The complete genome sequence of Escherichia coli K-12.</title>
        <authorList>
            <person name="Blattner F.R."/>
            <person name="Plunkett G. III"/>
            <person name="Bloch C.A."/>
            <person name="Perna N.T."/>
            <person name="Burland V."/>
            <person name="Riley M."/>
            <person name="Collado-Vides J."/>
            <person name="Glasner J.D."/>
            <person name="Rode C.K."/>
            <person name="Mayhew G.F."/>
            <person name="Gregor J."/>
            <person name="Davis N.W."/>
            <person name="Kirkpatrick H.A."/>
            <person name="Goeden M.A."/>
            <person name="Rose D.J."/>
            <person name="Mau B."/>
            <person name="Shao Y."/>
        </authorList>
    </citation>
    <scope>NUCLEOTIDE SEQUENCE [LARGE SCALE GENOMIC DNA]</scope>
    <source>
        <strain>K12 / MG1655 / ATCC 47076</strain>
    </source>
</reference>
<reference key="2">
    <citation type="journal article" date="2018" name="Proteomics">
        <title>Identifying new small proteins in Escherichia coli.</title>
        <authorList>
            <person name="VanOrsdel C.E."/>
            <person name="Kelly J.P."/>
            <person name="Burke B.N."/>
            <person name="Lein C.D."/>
            <person name="Oufiero C.E."/>
            <person name="Sanchez J.F."/>
            <person name="Wimmers L.E."/>
            <person name="Hearn D.J."/>
            <person name="Abuikhdair F.J."/>
            <person name="Barnhart K.R."/>
            <person name="Duley M.L."/>
            <person name="Ernst S.E.G."/>
            <person name="Kenerson B.A."/>
            <person name="Serafin A.J."/>
            <person name="Hemm M.R."/>
        </authorList>
    </citation>
    <scope>IDENTIFICATION</scope>
    <scope>INDUCTION</scope>
</reference>
<comment type="induction">
    <text evidence="1">Expressed at low levels in exponential and slightly higher levels in stationary phase (at protein level).</text>
</comment>
<name>YNEP_ECOLI</name>
<evidence type="ECO:0000269" key="1">
    <source>
    </source>
</evidence>
<evidence type="ECO:0000303" key="2">
    <source>
    </source>
</evidence>
<protein>
    <recommendedName>
        <fullName evidence="2">Protein YneP</fullName>
    </recommendedName>
</protein>
<accession>P0DPO7</accession>
<accession>A0A385XN55</accession>
<gene>
    <name evidence="2" type="primary">yneP</name>
    <name type="ordered locus">b4747</name>
</gene>
<keyword id="KW-1185">Reference proteome</keyword>